<organism>
    <name type="scientific">Rattus norvegicus</name>
    <name type="common">Rat</name>
    <dbReference type="NCBI Taxonomy" id="10116"/>
    <lineage>
        <taxon>Eukaryota</taxon>
        <taxon>Metazoa</taxon>
        <taxon>Chordata</taxon>
        <taxon>Craniata</taxon>
        <taxon>Vertebrata</taxon>
        <taxon>Euteleostomi</taxon>
        <taxon>Mammalia</taxon>
        <taxon>Eutheria</taxon>
        <taxon>Euarchontoglires</taxon>
        <taxon>Glires</taxon>
        <taxon>Rodentia</taxon>
        <taxon>Myomorpha</taxon>
        <taxon>Muroidea</taxon>
        <taxon>Muridae</taxon>
        <taxon>Murinae</taxon>
        <taxon>Rattus</taxon>
    </lineage>
</organism>
<gene>
    <name type="primary">Myl1</name>
</gene>
<name>MYL1_RAT</name>
<proteinExistence type="evidence at protein level"/>
<comment type="function">
    <text evidence="3">Non-regulatory myosin light chain required for proper formation and/or maintenance of myofibers, and thus appropriate muscle function.</text>
</comment>
<comment type="subunit">
    <text evidence="3">Myosin is a hexamer of 2 heavy chains and 4 light chains. Does not bind calcium.</text>
</comment>
<comment type="alternative products">
    <event type="alternative splicing"/>
    <isoform>
        <id>P02600-1</id>
        <name>MLC1</name>
        <sequence type="displayed"/>
    </isoform>
    <isoform>
        <id>P02600-2</id>
        <id>P02601-1</id>
        <name>MLC3</name>
        <sequence type="described" ref="VSP_038689"/>
    </isoform>
</comment>
<comment type="PTM">
    <text evidence="1">Isoform MLC3 is acetylated at position 2.</text>
</comment>
<sequence length="189" mass="20680">MAPKKDVKKPAAAAPAPAPAPAPAPAKPKEEKIDLSAIKIEFSKEQQEEFKEAFLLFDRTGECKITLSQVGDVLRALGTNPTNAEVKKVLGNPSNEEMNAKKIEFEQFLPMMQAISNNKDQGGYEDFVEGLRVFDKEGNGTVMGAELRHVLATLGEKMKEEEVEALLAGQEDSNGCINYEAFVKHIMSV</sequence>
<protein>
    <recommendedName>
        <fullName>Myosin light chain 1/3, skeletal muscle isoform</fullName>
        <shortName>MLC1/MLC3</shortName>
        <shortName>MLC1F/MLC3F</shortName>
    </recommendedName>
    <alternativeName>
        <fullName>Myosin light chain alkali 1/2</fullName>
        <shortName>Myosin light chain A1/A2</shortName>
    </alternativeName>
</protein>
<feature type="initiator methionine" description="Removed" evidence="2">
    <location>
        <position position="1"/>
    </location>
</feature>
<feature type="chain" id="PRO_0000198684" description="Myosin light chain 1/3, skeletal muscle isoform">
    <location>
        <begin position="2"/>
        <end position="189"/>
    </location>
</feature>
<feature type="domain" description="EF-hand 1" evidence="4">
    <location>
        <begin position="45"/>
        <end position="80"/>
    </location>
</feature>
<feature type="domain" description="EF-hand 2" evidence="4">
    <location>
        <begin position="122"/>
        <end position="157"/>
    </location>
</feature>
<feature type="domain" description="EF-hand 3" evidence="4">
    <location>
        <begin position="157"/>
        <end position="189"/>
    </location>
</feature>
<feature type="region of interest" description="Disordered" evidence="5">
    <location>
        <begin position="1"/>
        <end position="30"/>
    </location>
</feature>
<feature type="compositionally biased region" description="Pro residues" evidence="5">
    <location>
        <begin position="16"/>
        <end position="26"/>
    </location>
</feature>
<feature type="modified residue" description="N,N,N-trimethylalanine" evidence="2">
    <location>
        <position position="2"/>
    </location>
</feature>
<feature type="modified residue" description="Phosphothreonine" evidence="7">
    <location>
        <position position="66"/>
    </location>
</feature>
<feature type="modified residue" description="Phosphoserine" evidence="7">
    <location>
        <position position="68"/>
    </location>
</feature>
<feature type="modified residue" description="Phosphothreonine" evidence="7">
    <location>
        <position position="82"/>
    </location>
</feature>
<feature type="modified residue" description="Phosphoserine" evidence="7">
    <location>
        <position position="94"/>
    </location>
</feature>
<feature type="splice variant" id="VSP_038689" description="In isoform MLC3." evidence="6">
    <original>MAPKKDVKKPAAAAPAPAPAPAPAPAKPKEEKIDLSAIKIEFSKEQQE</original>
    <variation>MSFSADQIA</variation>
    <location>
        <begin position="1"/>
        <end position="48"/>
    </location>
</feature>
<feature type="sequence conflict" description="In Ref. 1; AAA98533." evidence="6" ref="1">
    <original>A</original>
    <variation>APA</variation>
    <location>
        <position position="26"/>
    </location>
</feature>
<feature type="sequence conflict" description="In Ref. 2; AAA41622/AAA41623." evidence="6" ref="2">
    <original>T</original>
    <variation>I</variation>
    <location>
        <position position="153"/>
    </location>
</feature>
<feature type="initiator methionine" description="Removed" evidence="6">
    <location sequence="P02600-2">
        <position position="1"/>
    </location>
</feature>
<feature type="modified residue" description="N-acetylalanine" evidence="6">
    <location sequence="P02600-2">
        <position position="2"/>
    </location>
</feature>
<feature type="modified residue" description="Phosphoserine" evidence="7">
    <location sequence="P02600-2">
        <position position="2"/>
    </location>
</feature>
<keyword id="KW-0007">Acetylation</keyword>
<keyword id="KW-0025">Alternative splicing</keyword>
<keyword id="KW-0903">Direct protein sequencing</keyword>
<keyword id="KW-0488">Methylation</keyword>
<keyword id="KW-0505">Motor protein</keyword>
<keyword id="KW-0514">Muscle protein</keyword>
<keyword id="KW-0518">Myosin</keyword>
<keyword id="KW-0597">Phosphoprotein</keyword>
<keyword id="KW-1185">Reference proteome</keyword>
<keyword id="KW-0677">Repeat</keyword>
<evidence type="ECO:0000250" key="1"/>
<evidence type="ECO:0000250" key="2">
    <source>
        <dbReference type="UniProtKB" id="P02602"/>
    </source>
</evidence>
<evidence type="ECO:0000250" key="3">
    <source>
        <dbReference type="UniProtKB" id="P05976"/>
    </source>
</evidence>
<evidence type="ECO:0000255" key="4">
    <source>
        <dbReference type="PROSITE-ProRule" id="PRU00448"/>
    </source>
</evidence>
<evidence type="ECO:0000256" key="5">
    <source>
        <dbReference type="SAM" id="MobiDB-lite"/>
    </source>
</evidence>
<evidence type="ECO:0000305" key="6"/>
<evidence type="ECO:0007744" key="7">
    <source>
    </source>
</evidence>
<reference key="1">
    <citation type="journal article" date="1984" name="J. Biol. Chem.">
        <title>Fast skeletal muscle myosin light chains 1 and 3 are produced from a single gene by a combined process of differential RNA transcription and splicing.</title>
        <authorList>
            <person name="Periasamy M."/>
            <person name="Strehler E.E."/>
            <person name="Garfinkel L.I."/>
            <person name="Gubits R.M."/>
            <person name="Ruiz-Opazo N."/>
            <person name="Nadal-Ginard B."/>
        </authorList>
    </citation>
    <scope>NUCLEOTIDE SEQUENCE [GENOMIC DNA]</scope>
    <scope>ALTERNATIVE SPLICING</scope>
</reference>
<reference key="2">
    <citation type="journal article" date="1985" name="Mol. Cell. Biol.">
        <title>Myosin light-chain 1 and 3 gene has two structurally distinct and differentially regulated promoters evolving at different rates.</title>
        <authorList>
            <person name="Strehler E.E."/>
            <person name="Periasamy M."/>
            <person name="Strehler-Page M.-A."/>
            <person name="Nadal-Ginard B."/>
        </authorList>
    </citation>
    <scope>NUCLEOTIDE SEQUENCE [GENOMIC DNA]</scope>
</reference>
<reference key="3">
    <citation type="submission" date="2006-12" db="UniProtKB">
        <authorList>
            <person name="Lubec G."/>
            <person name="Afjehi-Sadat L."/>
        </authorList>
    </citation>
    <scope>PROTEIN SEQUENCE OF 119-131</scope>
    <scope>IDENTIFICATION BY MASS SPECTROMETRY</scope>
    <source>
        <strain>Sprague-Dawley</strain>
        <tissue>Spinal cord</tissue>
    </source>
</reference>
<reference key="4">
    <citation type="journal article" date="2012" name="Nat. Commun.">
        <title>Quantitative maps of protein phosphorylation sites across 14 different rat organs and tissues.</title>
        <authorList>
            <person name="Lundby A."/>
            <person name="Secher A."/>
            <person name="Lage K."/>
            <person name="Nordsborg N.B."/>
            <person name="Dmytriyev A."/>
            <person name="Lundby C."/>
            <person name="Olsen J.V."/>
        </authorList>
    </citation>
    <scope>PHOSPHORYLATION [LARGE SCALE ANALYSIS] AT THR-66; SER-68; THR-82 AND SER-94</scope>
    <scope>PHOSPHORYLATION [LARGE SCALE ANALYSIS] AT SER-2 (ISOFORM MLC3)</scope>
    <scope>IDENTIFICATION BY MASS SPECTROMETRY [LARGE SCALE ANALYSIS]</scope>
</reference>
<accession>P02600</accession>
<accession>P02601</accession>
<dbReference type="EMBL" id="L00088">
    <property type="protein sequence ID" value="AAA98533.1"/>
    <property type="molecule type" value="Genomic_DNA"/>
</dbReference>
<dbReference type="EMBL" id="K02423">
    <property type="protein sequence ID" value="AAA98533.1"/>
    <property type="status" value="JOINED"/>
    <property type="molecule type" value="Genomic_DNA"/>
</dbReference>
<dbReference type="EMBL" id="K02426">
    <property type="protein sequence ID" value="AAA98533.1"/>
    <property type="status" value="JOINED"/>
    <property type="molecule type" value="Genomic_DNA"/>
</dbReference>
<dbReference type="EMBL" id="L00085">
    <property type="protein sequence ID" value="AAA98533.1"/>
    <property type="status" value="JOINED"/>
    <property type="molecule type" value="Genomic_DNA"/>
</dbReference>
<dbReference type="EMBL" id="L00086">
    <property type="protein sequence ID" value="AAA98533.1"/>
    <property type="status" value="JOINED"/>
    <property type="molecule type" value="Genomic_DNA"/>
</dbReference>
<dbReference type="EMBL" id="L00087">
    <property type="protein sequence ID" value="AAA98533.1"/>
    <property type="status" value="JOINED"/>
    <property type="molecule type" value="Genomic_DNA"/>
</dbReference>
<dbReference type="EMBL" id="L00088">
    <property type="protein sequence ID" value="AAA98534.1"/>
    <property type="molecule type" value="Genomic_DNA"/>
</dbReference>
<dbReference type="EMBL" id="K02424">
    <property type="protein sequence ID" value="AAA98534.1"/>
    <property type="status" value="JOINED"/>
    <property type="molecule type" value="Genomic_DNA"/>
</dbReference>
<dbReference type="EMBL" id="K02425">
    <property type="protein sequence ID" value="AAA98534.1"/>
    <property type="status" value="JOINED"/>
    <property type="molecule type" value="Genomic_DNA"/>
</dbReference>
<dbReference type="EMBL" id="L00085">
    <property type="protein sequence ID" value="AAA98534.1"/>
    <property type="status" value="JOINED"/>
    <property type="molecule type" value="Genomic_DNA"/>
</dbReference>
<dbReference type="EMBL" id="L00086">
    <property type="protein sequence ID" value="AAA98534.1"/>
    <property type="status" value="JOINED"/>
    <property type="molecule type" value="Genomic_DNA"/>
</dbReference>
<dbReference type="EMBL" id="L00087">
    <property type="protein sequence ID" value="AAA98534.1"/>
    <property type="status" value="JOINED"/>
    <property type="molecule type" value="Genomic_DNA"/>
</dbReference>
<dbReference type="EMBL" id="M12021">
    <property type="protein sequence ID" value="AAA41622.1"/>
    <property type="molecule type" value="Genomic_DNA"/>
</dbReference>
<dbReference type="EMBL" id="M12017">
    <property type="protein sequence ID" value="AAA41622.1"/>
    <property type="status" value="JOINED"/>
    <property type="molecule type" value="Genomic_DNA"/>
</dbReference>
<dbReference type="EMBL" id="M12018">
    <property type="protein sequence ID" value="AAA41622.1"/>
    <property type="status" value="JOINED"/>
    <property type="molecule type" value="Genomic_DNA"/>
</dbReference>
<dbReference type="EMBL" id="M12019">
    <property type="protein sequence ID" value="AAA41622.1"/>
    <property type="status" value="JOINED"/>
    <property type="molecule type" value="Genomic_DNA"/>
</dbReference>
<dbReference type="EMBL" id="M12020">
    <property type="protein sequence ID" value="AAA41622.1"/>
    <property type="status" value="JOINED"/>
    <property type="molecule type" value="Genomic_DNA"/>
</dbReference>
<dbReference type="EMBL" id="M12021">
    <property type="protein sequence ID" value="AAA41623.1"/>
    <property type="molecule type" value="Genomic_DNA"/>
</dbReference>
<dbReference type="EMBL" id="M12018">
    <property type="protein sequence ID" value="AAA41623.1"/>
    <property type="status" value="JOINED"/>
    <property type="molecule type" value="Genomic_DNA"/>
</dbReference>
<dbReference type="EMBL" id="M12019">
    <property type="protein sequence ID" value="AAA41623.1"/>
    <property type="status" value="JOINED"/>
    <property type="molecule type" value="Genomic_DNA"/>
</dbReference>
<dbReference type="EMBL" id="M12020">
    <property type="protein sequence ID" value="AAA41623.1"/>
    <property type="status" value="JOINED"/>
    <property type="molecule type" value="Genomic_DNA"/>
</dbReference>
<dbReference type="PIR" id="A03034">
    <property type="entry name" value="MORTA1"/>
</dbReference>
<dbReference type="PIR" id="I57590">
    <property type="entry name" value="I57590"/>
</dbReference>
<dbReference type="PIR" id="I77418">
    <property type="entry name" value="MORTA2"/>
</dbReference>
<dbReference type="RefSeq" id="NP_001071124.1">
    <molecule id="P02600-1"/>
    <property type="nucleotide sequence ID" value="NM_001077656.1"/>
</dbReference>
<dbReference type="RefSeq" id="NP_064489.1">
    <molecule id="P02600-2"/>
    <property type="nucleotide sequence ID" value="NM_020104.2"/>
</dbReference>
<dbReference type="SMR" id="P02600"/>
<dbReference type="BioGRID" id="248582">
    <property type="interactions" value="4"/>
</dbReference>
<dbReference type="FunCoup" id="P02600">
    <property type="interactions" value="102"/>
</dbReference>
<dbReference type="IntAct" id="P02600">
    <property type="interactions" value="3"/>
</dbReference>
<dbReference type="MINT" id="P02600"/>
<dbReference type="STRING" id="10116.ENSRNOP00000017838"/>
<dbReference type="GlyGen" id="P02600">
    <property type="glycosylation" value="1 site, 1 O-linked glycan (1 site)"/>
</dbReference>
<dbReference type="iPTMnet" id="P02600"/>
<dbReference type="PhosphoSitePlus" id="P02600"/>
<dbReference type="jPOST" id="P02600"/>
<dbReference type="PaxDb" id="10116-ENSRNOP00000017838"/>
<dbReference type="Ensembl" id="ENSRNOT00000017838.7">
    <molecule id="P02600-1"/>
    <property type="protein sequence ID" value="ENSRNOP00000017838.3"/>
    <property type="gene ID" value="ENSRNOG00000013262.8"/>
</dbReference>
<dbReference type="GeneID" id="56781"/>
<dbReference type="KEGG" id="rno:56781"/>
<dbReference type="UCSC" id="RGD:1598796">
    <molecule id="P02600-1"/>
    <property type="organism name" value="rat"/>
</dbReference>
<dbReference type="AGR" id="RGD:1598796"/>
<dbReference type="AGR" id="RGD:620884"/>
<dbReference type="CTD" id="4632"/>
<dbReference type="RGD" id="1598796">
    <property type="gene designation" value="Myl1"/>
</dbReference>
<dbReference type="eggNOG" id="KOG0030">
    <property type="taxonomic scope" value="Eukaryota"/>
</dbReference>
<dbReference type="GeneTree" id="ENSGT01030000234570"/>
<dbReference type="HOGENOM" id="CLU_061288_13_0_1"/>
<dbReference type="InParanoid" id="P02600"/>
<dbReference type="OMA" id="NPTNEEM"/>
<dbReference type="OrthoDB" id="5959761at2759"/>
<dbReference type="PhylomeDB" id="P02600"/>
<dbReference type="TreeFam" id="TF351553"/>
<dbReference type="Reactome" id="R-RNO-390522">
    <property type="pathway name" value="Striated Muscle Contraction"/>
</dbReference>
<dbReference type="PRO" id="PR:P02600"/>
<dbReference type="Proteomes" id="UP000002494">
    <property type="component" value="Chromosome 9"/>
</dbReference>
<dbReference type="Bgee" id="ENSRNOG00000013262">
    <property type="expression patterns" value="Expressed in quadriceps femoris and 16 other cell types or tissues"/>
</dbReference>
<dbReference type="GO" id="GO:0043292">
    <property type="term" value="C:contractile muscle fiber"/>
    <property type="evidence" value="ECO:0000314"/>
    <property type="project" value="RGD"/>
</dbReference>
<dbReference type="GO" id="GO:0030016">
    <property type="term" value="C:myofibril"/>
    <property type="evidence" value="ECO:0000266"/>
    <property type="project" value="RGD"/>
</dbReference>
<dbReference type="GO" id="GO:0016460">
    <property type="term" value="C:myosin II complex"/>
    <property type="evidence" value="ECO:0000318"/>
    <property type="project" value="GO_Central"/>
</dbReference>
<dbReference type="GO" id="GO:0005509">
    <property type="term" value="F:calcium ion binding"/>
    <property type="evidence" value="ECO:0007669"/>
    <property type="project" value="InterPro"/>
</dbReference>
<dbReference type="GO" id="GO:0008307">
    <property type="term" value="F:structural constituent of muscle"/>
    <property type="evidence" value="ECO:0000250"/>
    <property type="project" value="UniProtKB"/>
</dbReference>
<dbReference type="GO" id="GO:0060048">
    <property type="term" value="P:cardiac muscle contraction"/>
    <property type="evidence" value="ECO:0000315"/>
    <property type="project" value="RGD"/>
</dbReference>
<dbReference type="GO" id="GO:0006936">
    <property type="term" value="P:muscle contraction"/>
    <property type="evidence" value="ECO:0000266"/>
    <property type="project" value="RGD"/>
</dbReference>
<dbReference type="CDD" id="cd00051">
    <property type="entry name" value="EFh"/>
    <property type="match status" value="1"/>
</dbReference>
<dbReference type="FunFam" id="1.10.238.10:FF:000019">
    <property type="entry name" value="Myosin light chain 1 skeletal"/>
    <property type="match status" value="1"/>
</dbReference>
<dbReference type="FunFam" id="1.10.238.10:FF:000056">
    <property type="entry name" value="Myosin light chain 1 skeletal"/>
    <property type="match status" value="1"/>
</dbReference>
<dbReference type="Gene3D" id="1.10.238.10">
    <property type="entry name" value="EF-hand"/>
    <property type="match status" value="2"/>
</dbReference>
<dbReference type="InterPro" id="IPR050230">
    <property type="entry name" value="CALM/Myosin/TropC-like"/>
</dbReference>
<dbReference type="InterPro" id="IPR011992">
    <property type="entry name" value="EF-hand-dom_pair"/>
</dbReference>
<dbReference type="InterPro" id="IPR002048">
    <property type="entry name" value="EF_hand_dom"/>
</dbReference>
<dbReference type="PANTHER" id="PTHR23048">
    <property type="entry name" value="MYOSIN LIGHT CHAIN 1, 3"/>
    <property type="match status" value="1"/>
</dbReference>
<dbReference type="PANTHER" id="PTHR23048:SF3">
    <property type="entry name" value="MYOSIN LIGHT CHAIN 1_3, SKELETAL MUSCLE ISOFORM"/>
    <property type="match status" value="1"/>
</dbReference>
<dbReference type="SMART" id="SM00054">
    <property type="entry name" value="EFh"/>
    <property type="match status" value="2"/>
</dbReference>
<dbReference type="SUPFAM" id="SSF47473">
    <property type="entry name" value="EF-hand"/>
    <property type="match status" value="1"/>
</dbReference>
<dbReference type="PROSITE" id="PS50222">
    <property type="entry name" value="EF_HAND_2"/>
    <property type="match status" value="3"/>
</dbReference>